<sequence length="194" mass="21479">MKIFFIDNFDSFSYNLVYELECLGYEVAVYQNDIDPSYLMGLMNEEPKTPLLFISPGPGNPNSSGNLLKIIAMAKKKFPILGVCLGLQALAQSYGAKIIRSKEIVHGKATTIALKKHAVFKGLGESMVVGRYHSLMASGLPKNLEVIAEHDNIPMAIVNEEDKILAYQFHPESIMTLQGRALLEQSVGFLRELS</sequence>
<accession>Q9ZJU6</accession>
<proteinExistence type="inferred from homology"/>
<protein>
    <recommendedName>
        <fullName>Anthranilate synthase component 2</fullName>
        <shortName>AS</shortName>
        <shortName>ASII</shortName>
        <ecNumber>4.1.3.27</ecNumber>
    </recommendedName>
    <alternativeName>
        <fullName>Anthranilate synthase, GATase component</fullName>
    </alternativeName>
    <alternativeName>
        <fullName>Anthranilate synthase, glutamine amidotransferase component</fullName>
    </alternativeName>
</protein>
<dbReference type="EC" id="4.1.3.27"/>
<dbReference type="EMBL" id="AE001439">
    <property type="protein sequence ID" value="AAD06781.1"/>
    <property type="molecule type" value="Genomic_DNA"/>
</dbReference>
<dbReference type="PIR" id="F71836">
    <property type="entry name" value="F71836"/>
</dbReference>
<dbReference type="RefSeq" id="WP_000688236.1">
    <property type="nucleotide sequence ID" value="NC_000921.1"/>
</dbReference>
<dbReference type="SMR" id="Q9ZJU6"/>
<dbReference type="MEROPS" id="C26.960"/>
<dbReference type="KEGG" id="hpj:jhp_1202"/>
<dbReference type="PATRIC" id="fig|85963.30.peg.1370"/>
<dbReference type="eggNOG" id="COG0512">
    <property type="taxonomic scope" value="Bacteria"/>
</dbReference>
<dbReference type="UniPathway" id="UPA00035">
    <property type="reaction ID" value="UER00040"/>
</dbReference>
<dbReference type="Proteomes" id="UP000000804">
    <property type="component" value="Chromosome"/>
</dbReference>
<dbReference type="GO" id="GO:0005829">
    <property type="term" value="C:cytosol"/>
    <property type="evidence" value="ECO:0007669"/>
    <property type="project" value="TreeGrafter"/>
</dbReference>
<dbReference type="GO" id="GO:0004049">
    <property type="term" value="F:anthranilate synthase activity"/>
    <property type="evidence" value="ECO:0007669"/>
    <property type="project" value="UniProtKB-EC"/>
</dbReference>
<dbReference type="GO" id="GO:0000162">
    <property type="term" value="P:L-tryptophan biosynthetic process"/>
    <property type="evidence" value="ECO:0007669"/>
    <property type="project" value="UniProtKB-UniPathway"/>
</dbReference>
<dbReference type="CDD" id="cd01743">
    <property type="entry name" value="GATase1_Anthranilate_Synthase"/>
    <property type="match status" value="1"/>
</dbReference>
<dbReference type="FunFam" id="3.40.50.880:FF:000003">
    <property type="entry name" value="Anthranilate synthase component II"/>
    <property type="match status" value="1"/>
</dbReference>
<dbReference type="Gene3D" id="3.40.50.880">
    <property type="match status" value="1"/>
</dbReference>
<dbReference type="InterPro" id="IPR050472">
    <property type="entry name" value="Anth_synth/Amidotransfase"/>
</dbReference>
<dbReference type="InterPro" id="IPR029062">
    <property type="entry name" value="Class_I_gatase-like"/>
</dbReference>
<dbReference type="InterPro" id="IPR017926">
    <property type="entry name" value="GATASE"/>
</dbReference>
<dbReference type="InterPro" id="IPR006221">
    <property type="entry name" value="TrpG/PapA_dom"/>
</dbReference>
<dbReference type="NCBIfam" id="TIGR00566">
    <property type="entry name" value="trpG_papA"/>
    <property type="match status" value="1"/>
</dbReference>
<dbReference type="PANTHER" id="PTHR43418:SF4">
    <property type="entry name" value="MULTIFUNCTIONAL TRYPTOPHAN BIOSYNTHESIS PROTEIN"/>
    <property type="match status" value="1"/>
</dbReference>
<dbReference type="PANTHER" id="PTHR43418">
    <property type="entry name" value="MULTIFUNCTIONAL TRYPTOPHAN BIOSYNTHESIS PROTEIN-RELATED"/>
    <property type="match status" value="1"/>
</dbReference>
<dbReference type="Pfam" id="PF00117">
    <property type="entry name" value="GATase"/>
    <property type="match status" value="1"/>
</dbReference>
<dbReference type="PRINTS" id="PR00097">
    <property type="entry name" value="ANTSNTHASEII"/>
</dbReference>
<dbReference type="PRINTS" id="PR00099">
    <property type="entry name" value="CPSGATASE"/>
</dbReference>
<dbReference type="PRINTS" id="PR00096">
    <property type="entry name" value="GATASE"/>
</dbReference>
<dbReference type="SUPFAM" id="SSF52317">
    <property type="entry name" value="Class I glutamine amidotransferase-like"/>
    <property type="match status" value="1"/>
</dbReference>
<dbReference type="PROSITE" id="PS51273">
    <property type="entry name" value="GATASE_TYPE_1"/>
    <property type="match status" value="1"/>
</dbReference>
<reference key="1">
    <citation type="journal article" date="1999" name="Nature">
        <title>Genomic sequence comparison of two unrelated isolates of the human gastric pathogen Helicobacter pylori.</title>
        <authorList>
            <person name="Alm R.A."/>
            <person name="Ling L.-S.L."/>
            <person name="Moir D.T."/>
            <person name="King B.L."/>
            <person name="Brown E.D."/>
            <person name="Doig P.C."/>
            <person name="Smith D.R."/>
            <person name="Noonan B."/>
            <person name="Guild B.C."/>
            <person name="deJonge B.L."/>
            <person name="Carmel G."/>
            <person name="Tummino P.J."/>
            <person name="Caruso A."/>
            <person name="Uria-Nickelsen M."/>
            <person name="Mills D.M."/>
            <person name="Ives C."/>
            <person name="Gibson R."/>
            <person name="Merberg D."/>
            <person name="Mills S.D."/>
            <person name="Jiang Q."/>
            <person name="Taylor D.E."/>
            <person name="Vovis G.F."/>
            <person name="Trust T.J."/>
        </authorList>
    </citation>
    <scope>NUCLEOTIDE SEQUENCE [LARGE SCALE GENOMIC DNA]</scope>
    <source>
        <strain>J99 / ATCC 700824</strain>
    </source>
</reference>
<keyword id="KW-0028">Amino-acid biosynthesis</keyword>
<keyword id="KW-0057">Aromatic amino acid biosynthesis</keyword>
<keyword id="KW-0315">Glutamine amidotransferase</keyword>
<keyword id="KW-0456">Lyase</keyword>
<keyword id="KW-0822">Tryptophan biosynthesis</keyword>
<feature type="chain" id="PRO_0000056885" description="Anthranilate synthase component 2">
    <location>
        <begin position="1"/>
        <end position="194"/>
    </location>
</feature>
<feature type="domain" description="Glutamine amidotransferase type-1" evidence="3">
    <location>
        <begin position="2"/>
        <end position="194"/>
    </location>
</feature>
<feature type="active site" description="Nucleophile; for GATase activity" evidence="3">
    <location>
        <position position="84"/>
    </location>
</feature>
<feature type="active site" description="For GATase activity" evidence="3">
    <location>
        <position position="170"/>
    </location>
</feature>
<feature type="active site" description="For GATase activity" evidence="3">
    <location>
        <position position="172"/>
    </location>
</feature>
<feature type="binding site" evidence="2">
    <location>
        <begin position="57"/>
        <end position="59"/>
    </location>
    <ligand>
        <name>L-glutamine</name>
        <dbReference type="ChEBI" id="CHEBI:58359"/>
    </ligand>
</feature>
<feature type="binding site" evidence="2">
    <location>
        <position position="88"/>
    </location>
    <ligand>
        <name>L-glutamine</name>
        <dbReference type="ChEBI" id="CHEBI:58359"/>
    </ligand>
</feature>
<feature type="binding site" evidence="2">
    <location>
        <begin position="134"/>
        <end position="135"/>
    </location>
    <ligand>
        <name>L-glutamine</name>
        <dbReference type="ChEBI" id="CHEBI:58359"/>
    </ligand>
</feature>
<comment type="function">
    <text evidence="1">Part of a heterotetrameric complex that catalyzes the two-step biosynthesis of anthranilate, an intermediate in the biosynthesis of L-tryptophan. In the first step, the glutamine-binding beta subunit (TrpG) of anthranilate synthase (AS) provides the glutamine amidotransferase activity which generates ammonia as a substrate that, along with chorismate, is used in the second step, catalyzed by the large alpha subunit of AS (TrpE) to produce anthranilate. In the absence of TrpG, TrpE can synthesize anthranilate directly from chorismate and high concentrations of ammonia (By similarity).</text>
</comment>
<comment type="catalytic activity">
    <reaction>
        <text>chorismate + L-glutamine = anthranilate + pyruvate + L-glutamate + H(+)</text>
        <dbReference type="Rhea" id="RHEA:21732"/>
        <dbReference type="ChEBI" id="CHEBI:15361"/>
        <dbReference type="ChEBI" id="CHEBI:15378"/>
        <dbReference type="ChEBI" id="CHEBI:16567"/>
        <dbReference type="ChEBI" id="CHEBI:29748"/>
        <dbReference type="ChEBI" id="CHEBI:29985"/>
        <dbReference type="ChEBI" id="CHEBI:58359"/>
        <dbReference type="EC" id="4.1.3.27"/>
    </reaction>
</comment>
<comment type="pathway">
    <text>Amino-acid biosynthesis; L-tryptophan biosynthesis; L-tryptophan from chorismate: step 1/5.</text>
</comment>
<comment type="subunit">
    <text evidence="1">Heterotetramer consisting of two non-identical subunits: a beta subunit (TrpG) and a large alpha subunit (TrpE).</text>
</comment>
<name>TRPG_HELPJ</name>
<evidence type="ECO:0000250" key="1"/>
<evidence type="ECO:0000250" key="2">
    <source>
        <dbReference type="UniProtKB" id="P00900"/>
    </source>
</evidence>
<evidence type="ECO:0000255" key="3">
    <source>
        <dbReference type="PROSITE-ProRule" id="PRU00605"/>
    </source>
</evidence>
<organism>
    <name type="scientific">Helicobacter pylori (strain J99 / ATCC 700824)</name>
    <name type="common">Campylobacter pylori J99</name>
    <dbReference type="NCBI Taxonomy" id="85963"/>
    <lineage>
        <taxon>Bacteria</taxon>
        <taxon>Pseudomonadati</taxon>
        <taxon>Campylobacterota</taxon>
        <taxon>Epsilonproteobacteria</taxon>
        <taxon>Campylobacterales</taxon>
        <taxon>Helicobacteraceae</taxon>
        <taxon>Helicobacter</taxon>
    </lineage>
</organism>
<gene>
    <name type="primary">trpG</name>
    <name type="ordered locus">jhp_1202</name>
</gene>